<accession>Q8HS40</accession>
<proteinExistence type="inferred from homology"/>
<sequence>MEALVYTFLLVSTLGILFFAIFFREPPKVPTKGGKEN</sequence>
<organism>
    <name type="scientific">Ephedra sinica</name>
    <name type="common">Chinese ephedra</name>
    <name type="synonym">Ma huang</name>
    <dbReference type="NCBI Taxonomy" id="33152"/>
    <lineage>
        <taxon>Eukaryota</taxon>
        <taxon>Viridiplantae</taxon>
        <taxon>Streptophyta</taxon>
        <taxon>Embryophyta</taxon>
        <taxon>Tracheophyta</taxon>
        <taxon>Spermatophyta</taxon>
        <taxon>Gnetopsida</taxon>
        <taxon>Gnetidae</taxon>
        <taxon>Ephedrales</taxon>
        <taxon>Ephedraceae</taxon>
        <taxon>Ephedra</taxon>
    </lineage>
</organism>
<gene>
    <name evidence="1" type="primary">psbT</name>
</gene>
<keyword id="KW-0150">Chloroplast</keyword>
<keyword id="KW-0472">Membrane</keyword>
<keyword id="KW-0602">Photosynthesis</keyword>
<keyword id="KW-0604">Photosystem II</keyword>
<keyword id="KW-0934">Plastid</keyword>
<keyword id="KW-0793">Thylakoid</keyword>
<keyword id="KW-0812">Transmembrane</keyword>
<keyword id="KW-1133">Transmembrane helix</keyword>
<feature type="chain" id="PRO_0000217929" description="Photosystem II reaction center protein T">
    <location>
        <begin position="1"/>
        <end position="37"/>
    </location>
</feature>
<feature type="transmembrane region" description="Helical" evidence="1">
    <location>
        <begin position="3"/>
        <end position="23"/>
    </location>
</feature>
<protein>
    <recommendedName>
        <fullName evidence="1">Photosystem II reaction center protein T</fullName>
        <shortName evidence="1">PSII-T</shortName>
    </recommendedName>
</protein>
<comment type="function">
    <text evidence="1">Found at the monomer-monomer interface of the photosystem II (PS II) dimer, plays a role in assembly and dimerization of PSII. PSII is a light-driven water plastoquinone oxidoreductase, using light energy to abstract electrons from H(2)O, generating a proton gradient subsequently used for ATP formation.</text>
</comment>
<comment type="subunit">
    <text evidence="1">PSII is composed of 1 copy each of membrane proteins PsbA, PsbB, PsbC, PsbD, PsbE, PsbF, PsbH, PsbI, PsbJ, PsbK, PsbL, PsbM, PsbT, PsbY, PsbZ, Psb30/Ycf12, at least 3 peripheral proteins of the oxygen-evolving complex and a large number of cofactors. It forms dimeric complexes.</text>
</comment>
<comment type="subcellular location">
    <subcellularLocation>
        <location evidence="1">Plastid</location>
        <location evidence="1">Chloroplast thylakoid membrane</location>
        <topology evidence="1">Single-pass membrane protein</topology>
    </subcellularLocation>
</comment>
<comment type="similarity">
    <text evidence="1">Belongs to the PsbT family.</text>
</comment>
<geneLocation type="chloroplast"/>
<evidence type="ECO:0000255" key="1">
    <source>
        <dbReference type="HAMAP-Rule" id="MF_00808"/>
    </source>
</evidence>
<name>PSBT_EPHSI</name>
<dbReference type="EMBL" id="AY007462">
    <property type="protein sequence ID" value="AAG12360.1"/>
    <property type="molecule type" value="Genomic_DNA"/>
</dbReference>
<dbReference type="RefSeq" id="YP_009694812.1">
    <property type="nucleotide sequence ID" value="NC_044773.1"/>
</dbReference>
<dbReference type="SMR" id="Q8HS40"/>
<dbReference type="GeneID" id="41825934"/>
<dbReference type="GO" id="GO:0009535">
    <property type="term" value="C:chloroplast thylakoid membrane"/>
    <property type="evidence" value="ECO:0007669"/>
    <property type="project" value="UniProtKB-SubCell"/>
</dbReference>
<dbReference type="GO" id="GO:0009539">
    <property type="term" value="C:photosystem II reaction center"/>
    <property type="evidence" value="ECO:0007669"/>
    <property type="project" value="InterPro"/>
</dbReference>
<dbReference type="GO" id="GO:0015979">
    <property type="term" value="P:photosynthesis"/>
    <property type="evidence" value="ECO:0007669"/>
    <property type="project" value="UniProtKB-UniRule"/>
</dbReference>
<dbReference type="HAMAP" id="MF_00808">
    <property type="entry name" value="PSII_PsbT"/>
    <property type="match status" value="1"/>
</dbReference>
<dbReference type="InterPro" id="IPR001743">
    <property type="entry name" value="PSII_PsbT"/>
</dbReference>
<dbReference type="InterPro" id="IPR037268">
    <property type="entry name" value="PSII_PsbT_sf"/>
</dbReference>
<dbReference type="PANTHER" id="PTHR36411">
    <property type="match status" value="1"/>
</dbReference>
<dbReference type="PANTHER" id="PTHR36411:SF2">
    <property type="entry name" value="PHOTOSYSTEM II REACTION CENTER PROTEIN T"/>
    <property type="match status" value="1"/>
</dbReference>
<dbReference type="Pfam" id="PF01405">
    <property type="entry name" value="PsbT"/>
    <property type="match status" value="1"/>
</dbReference>
<dbReference type="SUPFAM" id="SSF161029">
    <property type="entry name" value="Photosystem II reaction center protein T, PsbT"/>
    <property type="match status" value="1"/>
</dbReference>
<reference key="1">
    <citation type="submission" date="2000-02" db="EMBL/GenBank/DDBJ databases">
        <title>Long branches in the seed plants and the root of the angiosperms.</title>
        <authorList>
            <person name="Graham S.W."/>
            <person name="Reeves P.A."/>
            <person name="Burns A."/>
            <person name="Olmstead R.G."/>
        </authorList>
    </citation>
    <scope>NUCLEOTIDE SEQUENCE [GENOMIC DNA]</scope>
</reference>